<proteinExistence type="inferred from homology"/>
<comment type="function">
    <text evidence="1">One of the primary rRNA binding proteins, it binds directly to 16S rRNA where it nucleates assembly of the body of the 30S subunit.</text>
</comment>
<comment type="function">
    <text evidence="1">With S5 and S12 plays an important role in translational accuracy.</text>
</comment>
<comment type="subunit">
    <text evidence="1">Part of the 30S ribosomal subunit. Contacts protein S5. The interaction surface between S4 and S5 is involved in control of translational fidelity.</text>
</comment>
<comment type="similarity">
    <text evidence="1">Belongs to the universal ribosomal protein uS4 family.</text>
</comment>
<evidence type="ECO:0000255" key="1">
    <source>
        <dbReference type="HAMAP-Rule" id="MF_01306"/>
    </source>
</evidence>
<evidence type="ECO:0000305" key="2"/>
<sequence length="204" mass="23785">MGRYIGPLTKVSRRLGVFVGGDIESFQKRNFPPGQHGRTQGRKKLSDYGVRLQEKQKLRFLYGGIREGQFKRYFERASKAAGNTGTVLLQLLERRLDNVVYRLGFAKTRLQARQLVKHGHFLVNGKKVDIPSYELDKGDIIEVREKSKKLEVFKENLESRDPRSVPRWLEIDKDNFRGKVVEIPEEIELEIPVNVQYIIEYYSM</sequence>
<dbReference type="EMBL" id="CP001080">
    <property type="protein sequence ID" value="ACD65909.1"/>
    <property type="molecule type" value="Genomic_DNA"/>
</dbReference>
<dbReference type="RefSeq" id="WP_012458998.1">
    <property type="nucleotide sequence ID" value="NC_010730.1"/>
</dbReference>
<dbReference type="SMR" id="B2V7I6"/>
<dbReference type="STRING" id="436114.SYO3AOP1_0264"/>
<dbReference type="KEGG" id="sul:SYO3AOP1_0264"/>
<dbReference type="eggNOG" id="COG0522">
    <property type="taxonomic scope" value="Bacteria"/>
</dbReference>
<dbReference type="HOGENOM" id="CLU_092403_1_0_0"/>
<dbReference type="GO" id="GO:0015935">
    <property type="term" value="C:small ribosomal subunit"/>
    <property type="evidence" value="ECO:0007669"/>
    <property type="project" value="InterPro"/>
</dbReference>
<dbReference type="GO" id="GO:0019843">
    <property type="term" value="F:rRNA binding"/>
    <property type="evidence" value="ECO:0007669"/>
    <property type="project" value="UniProtKB-UniRule"/>
</dbReference>
<dbReference type="GO" id="GO:0003735">
    <property type="term" value="F:structural constituent of ribosome"/>
    <property type="evidence" value="ECO:0007669"/>
    <property type="project" value="InterPro"/>
</dbReference>
<dbReference type="GO" id="GO:0042274">
    <property type="term" value="P:ribosomal small subunit biogenesis"/>
    <property type="evidence" value="ECO:0007669"/>
    <property type="project" value="TreeGrafter"/>
</dbReference>
<dbReference type="GO" id="GO:0006412">
    <property type="term" value="P:translation"/>
    <property type="evidence" value="ECO:0007669"/>
    <property type="project" value="UniProtKB-UniRule"/>
</dbReference>
<dbReference type="CDD" id="cd00165">
    <property type="entry name" value="S4"/>
    <property type="match status" value="1"/>
</dbReference>
<dbReference type="FunFam" id="3.10.290.10:FF:000001">
    <property type="entry name" value="30S ribosomal protein S4"/>
    <property type="match status" value="1"/>
</dbReference>
<dbReference type="Gene3D" id="1.10.1050.10">
    <property type="entry name" value="Ribosomal Protein S4 Delta 41, Chain A, domain 1"/>
    <property type="match status" value="1"/>
</dbReference>
<dbReference type="Gene3D" id="3.10.290.10">
    <property type="entry name" value="RNA-binding S4 domain"/>
    <property type="match status" value="1"/>
</dbReference>
<dbReference type="HAMAP" id="MF_01306_B">
    <property type="entry name" value="Ribosomal_uS4_B"/>
    <property type="match status" value="1"/>
</dbReference>
<dbReference type="InterPro" id="IPR022801">
    <property type="entry name" value="Ribosomal_uS4"/>
</dbReference>
<dbReference type="InterPro" id="IPR005709">
    <property type="entry name" value="Ribosomal_uS4_bac-type"/>
</dbReference>
<dbReference type="InterPro" id="IPR018079">
    <property type="entry name" value="Ribosomal_uS4_CS"/>
</dbReference>
<dbReference type="InterPro" id="IPR001912">
    <property type="entry name" value="Ribosomal_uS4_N"/>
</dbReference>
<dbReference type="InterPro" id="IPR002942">
    <property type="entry name" value="S4_RNA-bd"/>
</dbReference>
<dbReference type="InterPro" id="IPR036986">
    <property type="entry name" value="S4_RNA-bd_sf"/>
</dbReference>
<dbReference type="NCBIfam" id="NF003717">
    <property type="entry name" value="PRK05327.1"/>
    <property type="match status" value="1"/>
</dbReference>
<dbReference type="NCBIfam" id="TIGR01017">
    <property type="entry name" value="rpsD_bact"/>
    <property type="match status" value="1"/>
</dbReference>
<dbReference type="PANTHER" id="PTHR11831">
    <property type="entry name" value="30S 40S RIBOSOMAL PROTEIN"/>
    <property type="match status" value="1"/>
</dbReference>
<dbReference type="PANTHER" id="PTHR11831:SF4">
    <property type="entry name" value="SMALL RIBOSOMAL SUBUNIT PROTEIN US4M"/>
    <property type="match status" value="1"/>
</dbReference>
<dbReference type="Pfam" id="PF00163">
    <property type="entry name" value="Ribosomal_S4"/>
    <property type="match status" value="1"/>
</dbReference>
<dbReference type="Pfam" id="PF01479">
    <property type="entry name" value="S4"/>
    <property type="match status" value="1"/>
</dbReference>
<dbReference type="SMART" id="SM01390">
    <property type="entry name" value="Ribosomal_S4"/>
    <property type="match status" value="1"/>
</dbReference>
<dbReference type="SMART" id="SM00363">
    <property type="entry name" value="S4"/>
    <property type="match status" value="1"/>
</dbReference>
<dbReference type="SUPFAM" id="SSF55174">
    <property type="entry name" value="Alpha-L RNA-binding motif"/>
    <property type="match status" value="1"/>
</dbReference>
<dbReference type="PROSITE" id="PS00632">
    <property type="entry name" value="RIBOSOMAL_S4"/>
    <property type="match status" value="1"/>
</dbReference>
<dbReference type="PROSITE" id="PS50889">
    <property type="entry name" value="S4"/>
    <property type="match status" value="1"/>
</dbReference>
<reference key="1">
    <citation type="journal article" date="2009" name="J. Bacteriol.">
        <title>Complete and draft genome sequences of six members of the Aquificales.</title>
        <authorList>
            <person name="Reysenbach A.-L."/>
            <person name="Hamamura N."/>
            <person name="Podar M."/>
            <person name="Griffiths E."/>
            <person name="Ferreira S."/>
            <person name="Hochstein R."/>
            <person name="Heidelberg J."/>
            <person name="Johnson J."/>
            <person name="Mead D."/>
            <person name="Pohorille A."/>
            <person name="Sarmiento M."/>
            <person name="Schweighofer K."/>
            <person name="Seshadri R."/>
            <person name="Voytek M.A."/>
        </authorList>
    </citation>
    <scope>NUCLEOTIDE SEQUENCE [LARGE SCALE GENOMIC DNA]</scope>
    <source>
        <strain>YO3AOP1</strain>
    </source>
</reference>
<organism>
    <name type="scientific">Sulfurihydrogenibium sp. (strain YO3AOP1)</name>
    <dbReference type="NCBI Taxonomy" id="436114"/>
    <lineage>
        <taxon>Bacteria</taxon>
        <taxon>Pseudomonadati</taxon>
        <taxon>Aquificota</taxon>
        <taxon>Aquificia</taxon>
        <taxon>Aquificales</taxon>
        <taxon>Hydrogenothermaceae</taxon>
        <taxon>Sulfurihydrogenibium</taxon>
    </lineage>
</organism>
<gene>
    <name evidence="1" type="primary">rpsD</name>
    <name type="ordered locus">SYO3AOP1_0264</name>
</gene>
<protein>
    <recommendedName>
        <fullName evidence="1">Small ribosomal subunit protein uS4</fullName>
    </recommendedName>
    <alternativeName>
        <fullName evidence="2">30S ribosomal protein S4</fullName>
    </alternativeName>
</protein>
<accession>B2V7I6</accession>
<keyword id="KW-0687">Ribonucleoprotein</keyword>
<keyword id="KW-0689">Ribosomal protein</keyword>
<keyword id="KW-0694">RNA-binding</keyword>
<keyword id="KW-0699">rRNA-binding</keyword>
<feature type="chain" id="PRO_1000140803" description="Small ribosomal subunit protein uS4">
    <location>
        <begin position="1"/>
        <end position="204"/>
    </location>
</feature>
<feature type="domain" description="S4 RNA-binding" evidence="1">
    <location>
        <begin position="94"/>
        <end position="157"/>
    </location>
</feature>
<name>RS4_SULSY</name>